<keyword id="KW-0067">ATP-binding</keyword>
<keyword id="KW-0963">Cytoplasm</keyword>
<keyword id="KW-0227">DNA damage</keyword>
<keyword id="KW-0228">DNA excision</keyword>
<keyword id="KW-0234">DNA repair</keyword>
<keyword id="KW-0238">DNA-binding</keyword>
<keyword id="KW-0267">Excision nuclease</keyword>
<keyword id="KW-0479">Metal-binding</keyword>
<keyword id="KW-0547">Nucleotide-binding</keyword>
<keyword id="KW-1185">Reference proteome</keyword>
<keyword id="KW-0677">Repeat</keyword>
<keyword id="KW-0742">SOS response</keyword>
<keyword id="KW-0862">Zinc</keyword>
<keyword id="KW-0863">Zinc-finger</keyword>
<reference key="1">
    <citation type="journal article" date="2005" name="J. Bacteriol.">
        <title>Insights on evolution of virulence and resistance from the complete genome analysis of an early methicillin-resistant Staphylococcus aureus strain and a biofilm-producing methicillin-resistant Staphylococcus epidermidis strain.</title>
        <authorList>
            <person name="Gill S.R."/>
            <person name="Fouts D.E."/>
            <person name="Archer G.L."/>
            <person name="Mongodin E.F."/>
            <person name="DeBoy R.T."/>
            <person name="Ravel J."/>
            <person name="Paulsen I.T."/>
            <person name="Kolonay J.F."/>
            <person name="Brinkac L.M."/>
            <person name="Beanan M.J."/>
            <person name="Dodson R.J."/>
            <person name="Daugherty S.C."/>
            <person name="Madupu R."/>
            <person name="Angiuoli S.V."/>
            <person name="Durkin A.S."/>
            <person name="Haft D.H."/>
            <person name="Vamathevan J.J."/>
            <person name="Khouri H."/>
            <person name="Utterback T.R."/>
            <person name="Lee C."/>
            <person name="Dimitrov G."/>
            <person name="Jiang L."/>
            <person name="Qin H."/>
            <person name="Weidman J."/>
            <person name="Tran K."/>
            <person name="Kang K.H."/>
            <person name="Hance I.R."/>
            <person name="Nelson K.E."/>
            <person name="Fraser C.M."/>
        </authorList>
    </citation>
    <scope>NUCLEOTIDE SEQUENCE [LARGE SCALE GENOMIC DNA]</scope>
    <source>
        <strain>ATCC 35984 / DSM 28319 / BCRC 17069 / CCUG 31568 / BM 3577 / RP62A</strain>
    </source>
</reference>
<gene>
    <name evidence="1" type="primary">uvrA</name>
    <name type="ordered locus">SERP0427</name>
</gene>
<accession>Q5HQW9</accession>
<comment type="function">
    <text evidence="1">The UvrABC repair system catalyzes the recognition and processing of DNA lesions. UvrA is an ATPase and a DNA-binding protein. A damage recognition complex composed of 2 UvrA and 2 UvrB subunits scans DNA for abnormalities. When the presence of a lesion has been verified by UvrB, the UvrA molecules dissociate.</text>
</comment>
<comment type="subunit">
    <text evidence="1">Forms a heterotetramer with UvrB during the search for lesions.</text>
</comment>
<comment type="subcellular location">
    <subcellularLocation>
        <location evidence="1">Cytoplasm</location>
    </subcellularLocation>
</comment>
<comment type="similarity">
    <text evidence="1">Belongs to the ABC transporter superfamily. UvrA family.</text>
</comment>
<evidence type="ECO:0000255" key="1">
    <source>
        <dbReference type="HAMAP-Rule" id="MF_00205"/>
    </source>
</evidence>
<sequence>MKGPSIVVKGARAHNLKGVDIELPKNKLIVMTGLSGSGKSSLAFDTIYAEGQRRYVESLSAYARQFLGQMDKPDVDTIEGLSPAISIDQKTTSKNPRSTVATVTEIYDYIRLLYARVGKPYCPYHGIEIESQTVQQMVDRILELEERTKIQLLAPVISHRKGSHEKLIEDIGKKGYVRLRVDDEIVDVNEVPQLDKNKNHTIEVVVDRLVVKDGIETRLADSIETALELAEGNLTVDVINGEELKFSENHACPICGFSIGELEPRMFSFNSPFGACPTCDGLGQKLKVDLDLVIPDKNKTLNEGAIEPWEPTSSDFYPTLLKRVCEVYKINMDKPYKKLTDRQKNILMNGSGEKEIEFTFTQRNGGTRKRKMVFEGVVPNIDRRYHESPSEYTREMMSKYMTELPCETCHGKRLSKEALSVYVGDYNIGEVVEYSIKNALYYFENLKLSDQDKSIADQILKEIISRLSFLNNVGLEYLTLDRSSGTLSGGEAQRIRLATQIGSRLTGVLYVLDEPSIGLHQRDNDRLINTLKEMRDLGNTLIVVEHDDDTMRAADYLVDVGPGAGNHGGEVVSSGTPNKVMKDKKSLTGQYLSGKKRIEVPEYRREITDRKIQIKGAKSNNLKNVNVDFPLSVLTVVTGVSGSGKSSLVNEILYKALAQKINKSKVKPGNFDEIKGIDQLDKIIDIDQSPIGRTPRSNPATYTGVFDDIRDVFAQTNEAKIRGYQKGRFSFNVKGGRCEACKGDGIIKIEMHFLPDVYVPCEVCDGKRYNRETLEVTYKGKNIADVLEMTVEEATHFFENIPKIKRKLQTLVDVGLGYITLGQQATTLSGGEAQRVKLASELHKRSTGRSIYILDEPTTGLHVDDISRLLKVLNRIVENGDTVVIIEHNLDVIKTADHIIDLGPEGGEGGGTIIATGTPEEIAQNKGSYTGQYLKPVLERDSVE</sequence>
<dbReference type="EMBL" id="CP000029">
    <property type="protein sequence ID" value="AAW53841.1"/>
    <property type="molecule type" value="Genomic_DNA"/>
</dbReference>
<dbReference type="RefSeq" id="WP_001829652.1">
    <property type="nucleotide sequence ID" value="NC_002976.3"/>
</dbReference>
<dbReference type="SMR" id="Q5HQW9"/>
<dbReference type="STRING" id="176279.SERP0427"/>
<dbReference type="KEGG" id="ser:SERP0427"/>
<dbReference type="eggNOG" id="COG0178">
    <property type="taxonomic scope" value="Bacteria"/>
</dbReference>
<dbReference type="HOGENOM" id="CLU_001370_0_2_9"/>
<dbReference type="Proteomes" id="UP000000531">
    <property type="component" value="Chromosome"/>
</dbReference>
<dbReference type="GO" id="GO:0005737">
    <property type="term" value="C:cytoplasm"/>
    <property type="evidence" value="ECO:0007669"/>
    <property type="project" value="UniProtKB-SubCell"/>
</dbReference>
<dbReference type="GO" id="GO:0009380">
    <property type="term" value="C:excinuclease repair complex"/>
    <property type="evidence" value="ECO:0007669"/>
    <property type="project" value="InterPro"/>
</dbReference>
<dbReference type="GO" id="GO:0005524">
    <property type="term" value="F:ATP binding"/>
    <property type="evidence" value="ECO:0007669"/>
    <property type="project" value="UniProtKB-UniRule"/>
</dbReference>
<dbReference type="GO" id="GO:0016887">
    <property type="term" value="F:ATP hydrolysis activity"/>
    <property type="evidence" value="ECO:0007669"/>
    <property type="project" value="InterPro"/>
</dbReference>
<dbReference type="GO" id="GO:0003677">
    <property type="term" value="F:DNA binding"/>
    <property type="evidence" value="ECO:0007669"/>
    <property type="project" value="UniProtKB-UniRule"/>
</dbReference>
<dbReference type="GO" id="GO:0009381">
    <property type="term" value="F:excinuclease ABC activity"/>
    <property type="evidence" value="ECO:0007669"/>
    <property type="project" value="UniProtKB-UniRule"/>
</dbReference>
<dbReference type="GO" id="GO:0008270">
    <property type="term" value="F:zinc ion binding"/>
    <property type="evidence" value="ECO:0007669"/>
    <property type="project" value="UniProtKB-UniRule"/>
</dbReference>
<dbReference type="GO" id="GO:0006289">
    <property type="term" value="P:nucleotide-excision repair"/>
    <property type="evidence" value="ECO:0007669"/>
    <property type="project" value="UniProtKB-UniRule"/>
</dbReference>
<dbReference type="GO" id="GO:0009432">
    <property type="term" value="P:SOS response"/>
    <property type="evidence" value="ECO:0007669"/>
    <property type="project" value="UniProtKB-UniRule"/>
</dbReference>
<dbReference type="CDD" id="cd03270">
    <property type="entry name" value="ABC_UvrA_I"/>
    <property type="match status" value="1"/>
</dbReference>
<dbReference type="CDD" id="cd03271">
    <property type="entry name" value="ABC_UvrA_II"/>
    <property type="match status" value="1"/>
</dbReference>
<dbReference type="FunFam" id="1.20.1580.10:FF:000002">
    <property type="entry name" value="UvrABC system protein A"/>
    <property type="match status" value="1"/>
</dbReference>
<dbReference type="FunFam" id="3.40.50.300:FF:000028">
    <property type="entry name" value="UvrABC system protein A"/>
    <property type="match status" value="1"/>
</dbReference>
<dbReference type="Gene3D" id="1.10.8.280">
    <property type="entry name" value="ABC transporter ATPase domain-like"/>
    <property type="match status" value="1"/>
</dbReference>
<dbReference type="Gene3D" id="1.20.1580.10">
    <property type="entry name" value="ABC transporter ATPase like domain"/>
    <property type="match status" value="2"/>
</dbReference>
<dbReference type="Gene3D" id="3.30.1490.20">
    <property type="entry name" value="ATP-grasp fold, A domain"/>
    <property type="match status" value="1"/>
</dbReference>
<dbReference type="Gene3D" id="3.40.50.300">
    <property type="entry name" value="P-loop containing nucleotide triphosphate hydrolases"/>
    <property type="match status" value="2"/>
</dbReference>
<dbReference type="HAMAP" id="MF_00205">
    <property type="entry name" value="UvrA"/>
    <property type="match status" value="1"/>
</dbReference>
<dbReference type="InterPro" id="IPR003439">
    <property type="entry name" value="ABC_transporter-like_ATP-bd"/>
</dbReference>
<dbReference type="InterPro" id="IPR017871">
    <property type="entry name" value="ABC_transporter-like_CS"/>
</dbReference>
<dbReference type="InterPro" id="IPR013815">
    <property type="entry name" value="ATP_grasp_subdomain_1"/>
</dbReference>
<dbReference type="InterPro" id="IPR027417">
    <property type="entry name" value="P-loop_NTPase"/>
</dbReference>
<dbReference type="InterPro" id="IPR004602">
    <property type="entry name" value="UvrA"/>
</dbReference>
<dbReference type="InterPro" id="IPR041552">
    <property type="entry name" value="UvrA_DNA-bd"/>
</dbReference>
<dbReference type="InterPro" id="IPR041102">
    <property type="entry name" value="UvrA_inter"/>
</dbReference>
<dbReference type="NCBIfam" id="NF001503">
    <property type="entry name" value="PRK00349.1"/>
    <property type="match status" value="1"/>
</dbReference>
<dbReference type="NCBIfam" id="TIGR00630">
    <property type="entry name" value="uvra"/>
    <property type="match status" value="1"/>
</dbReference>
<dbReference type="PANTHER" id="PTHR43152">
    <property type="entry name" value="UVRABC SYSTEM PROTEIN A"/>
    <property type="match status" value="1"/>
</dbReference>
<dbReference type="PANTHER" id="PTHR43152:SF3">
    <property type="entry name" value="UVRABC SYSTEM PROTEIN A"/>
    <property type="match status" value="1"/>
</dbReference>
<dbReference type="Pfam" id="PF17755">
    <property type="entry name" value="UvrA_DNA-bind"/>
    <property type="match status" value="1"/>
</dbReference>
<dbReference type="Pfam" id="PF17760">
    <property type="entry name" value="UvrA_inter"/>
    <property type="match status" value="1"/>
</dbReference>
<dbReference type="SUPFAM" id="SSF52540">
    <property type="entry name" value="P-loop containing nucleoside triphosphate hydrolases"/>
    <property type="match status" value="2"/>
</dbReference>
<dbReference type="PROSITE" id="PS00211">
    <property type="entry name" value="ABC_TRANSPORTER_1"/>
    <property type="match status" value="2"/>
</dbReference>
<dbReference type="PROSITE" id="PS50893">
    <property type="entry name" value="ABC_TRANSPORTER_2"/>
    <property type="match status" value="1"/>
</dbReference>
<proteinExistence type="inferred from homology"/>
<organism>
    <name type="scientific">Staphylococcus epidermidis (strain ATCC 35984 / DSM 28319 / BCRC 17069 / CCUG 31568 / BM 3577 / RP62A)</name>
    <dbReference type="NCBI Taxonomy" id="176279"/>
    <lineage>
        <taxon>Bacteria</taxon>
        <taxon>Bacillati</taxon>
        <taxon>Bacillota</taxon>
        <taxon>Bacilli</taxon>
        <taxon>Bacillales</taxon>
        <taxon>Staphylococcaceae</taxon>
        <taxon>Staphylococcus</taxon>
    </lineage>
</organism>
<protein>
    <recommendedName>
        <fullName evidence="1">UvrABC system protein A</fullName>
        <shortName evidence="1">UvrA protein</shortName>
    </recommendedName>
    <alternativeName>
        <fullName evidence="1">Excinuclease ABC subunit A</fullName>
    </alternativeName>
</protein>
<name>UVRA_STAEQ</name>
<feature type="chain" id="PRO_0000093096" description="UvrABC system protein A">
    <location>
        <begin position="1"/>
        <end position="944"/>
    </location>
</feature>
<feature type="domain" description="ABC transporter 1" evidence="1">
    <location>
        <begin position="309"/>
        <end position="587"/>
    </location>
</feature>
<feature type="domain" description="ABC transporter 2" evidence="1">
    <location>
        <begin position="607"/>
        <end position="935"/>
    </location>
</feature>
<feature type="zinc finger region" description="C4-type" evidence="1">
    <location>
        <begin position="252"/>
        <end position="279"/>
    </location>
</feature>
<feature type="zinc finger region" description="C4-type" evidence="1">
    <location>
        <begin position="738"/>
        <end position="764"/>
    </location>
</feature>
<feature type="binding site" evidence="1">
    <location>
        <begin position="33"/>
        <end position="40"/>
    </location>
    <ligand>
        <name>ATP</name>
        <dbReference type="ChEBI" id="CHEBI:30616"/>
    </ligand>
</feature>
<feature type="binding site" evidence="1">
    <location>
        <begin position="639"/>
        <end position="646"/>
    </location>
    <ligand>
        <name>ATP</name>
        <dbReference type="ChEBI" id="CHEBI:30616"/>
    </ligand>
</feature>